<sequence>MDNLDQLVQQAQADFAGVSDSAQLEQAKARYLGKSGALTEQLKGLGKLPPEEKREAGAAINRAKTAIEAALEARRNALREAALLAQLAAEALDVTLPGRGAQGGGLHPVSRTLERIEMLFRSIGFIVADGPEIETDWHNFTALNTPENHPARSMHDTFYLEGRDDVLLRTHTSPVQIRTMLAHVKRHAEAAAMPEIRVIIPGRVYRVDSDATHSPMFHQVEGLWVGEKVSFADLKGVIADFLRKFFETEDLQVRFRPSFFPFTEPSAEIDVAFMSGPLKGRWLEIAGCGMVHPNVLRFGGVDPERYTGFAFGMGPDRLTMLRYGVNDLRLFFEGDLRFLSQFR</sequence>
<feature type="chain" id="PRO_1000006798" description="Phenylalanine--tRNA ligase alpha subunit">
    <location>
        <begin position="1"/>
        <end position="343"/>
    </location>
</feature>
<feature type="binding site" evidence="1">
    <location>
        <position position="264"/>
    </location>
    <ligand>
        <name>Mg(2+)</name>
        <dbReference type="ChEBI" id="CHEBI:18420"/>
        <note>shared with beta subunit</note>
    </ligand>
</feature>
<gene>
    <name evidence="1" type="primary">pheS</name>
    <name type="ordered locus">azo1083</name>
</gene>
<keyword id="KW-0030">Aminoacyl-tRNA synthetase</keyword>
<keyword id="KW-0067">ATP-binding</keyword>
<keyword id="KW-0963">Cytoplasm</keyword>
<keyword id="KW-0436">Ligase</keyword>
<keyword id="KW-0460">Magnesium</keyword>
<keyword id="KW-0479">Metal-binding</keyword>
<keyword id="KW-0547">Nucleotide-binding</keyword>
<keyword id="KW-0648">Protein biosynthesis</keyword>
<keyword id="KW-1185">Reference proteome</keyword>
<dbReference type="EC" id="6.1.1.20" evidence="1"/>
<dbReference type="EMBL" id="AM406670">
    <property type="protein sequence ID" value="CAL93700.1"/>
    <property type="molecule type" value="Genomic_DNA"/>
</dbReference>
<dbReference type="RefSeq" id="WP_011764817.1">
    <property type="nucleotide sequence ID" value="NC_008702.1"/>
</dbReference>
<dbReference type="SMR" id="A1K4E5"/>
<dbReference type="STRING" id="62928.azo1083"/>
<dbReference type="KEGG" id="aoa:dqs_1192"/>
<dbReference type="KEGG" id="azo:azo1083"/>
<dbReference type="eggNOG" id="COG0016">
    <property type="taxonomic scope" value="Bacteria"/>
</dbReference>
<dbReference type="HOGENOM" id="CLU_025086_0_1_4"/>
<dbReference type="OrthoDB" id="9800719at2"/>
<dbReference type="Proteomes" id="UP000002588">
    <property type="component" value="Chromosome"/>
</dbReference>
<dbReference type="GO" id="GO:0005737">
    <property type="term" value="C:cytoplasm"/>
    <property type="evidence" value="ECO:0007669"/>
    <property type="project" value="UniProtKB-SubCell"/>
</dbReference>
<dbReference type="GO" id="GO:0005524">
    <property type="term" value="F:ATP binding"/>
    <property type="evidence" value="ECO:0007669"/>
    <property type="project" value="UniProtKB-UniRule"/>
</dbReference>
<dbReference type="GO" id="GO:0000287">
    <property type="term" value="F:magnesium ion binding"/>
    <property type="evidence" value="ECO:0007669"/>
    <property type="project" value="UniProtKB-UniRule"/>
</dbReference>
<dbReference type="GO" id="GO:0004826">
    <property type="term" value="F:phenylalanine-tRNA ligase activity"/>
    <property type="evidence" value="ECO:0007669"/>
    <property type="project" value="UniProtKB-UniRule"/>
</dbReference>
<dbReference type="GO" id="GO:0000049">
    <property type="term" value="F:tRNA binding"/>
    <property type="evidence" value="ECO:0007669"/>
    <property type="project" value="InterPro"/>
</dbReference>
<dbReference type="GO" id="GO:0006432">
    <property type="term" value="P:phenylalanyl-tRNA aminoacylation"/>
    <property type="evidence" value="ECO:0007669"/>
    <property type="project" value="UniProtKB-UniRule"/>
</dbReference>
<dbReference type="CDD" id="cd00496">
    <property type="entry name" value="PheRS_alpha_core"/>
    <property type="match status" value="1"/>
</dbReference>
<dbReference type="FunFam" id="3.30.930.10:FF:000003">
    <property type="entry name" value="Phenylalanine--tRNA ligase alpha subunit"/>
    <property type="match status" value="1"/>
</dbReference>
<dbReference type="Gene3D" id="3.30.930.10">
    <property type="entry name" value="Bira Bifunctional Protein, Domain 2"/>
    <property type="match status" value="1"/>
</dbReference>
<dbReference type="HAMAP" id="MF_00281">
    <property type="entry name" value="Phe_tRNA_synth_alpha1"/>
    <property type="match status" value="1"/>
</dbReference>
<dbReference type="InterPro" id="IPR006195">
    <property type="entry name" value="aa-tRNA-synth_II"/>
</dbReference>
<dbReference type="InterPro" id="IPR045864">
    <property type="entry name" value="aa-tRNA-synth_II/BPL/LPL"/>
</dbReference>
<dbReference type="InterPro" id="IPR004529">
    <property type="entry name" value="Phe-tRNA-synth_IIc_asu"/>
</dbReference>
<dbReference type="InterPro" id="IPR004188">
    <property type="entry name" value="Phe-tRNA_ligase_II_N"/>
</dbReference>
<dbReference type="InterPro" id="IPR022911">
    <property type="entry name" value="Phe_tRNA_ligase_alpha1_bac"/>
</dbReference>
<dbReference type="InterPro" id="IPR002319">
    <property type="entry name" value="Phenylalanyl-tRNA_Synthase"/>
</dbReference>
<dbReference type="InterPro" id="IPR010978">
    <property type="entry name" value="tRNA-bd_arm"/>
</dbReference>
<dbReference type="NCBIfam" id="TIGR00468">
    <property type="entry name" value="pheS"/>
    <property type="match status" value="1"/>
</dbReference>
<dbReference type="PANTHER" id="PTHR11538:SF41">
    <property type="entry name" value="PHENYLALANINE--TRNA LIGASE, MITOCHONDRIAL"/>
    <property type="match status" value="1"/>
</dbReference>
<dbReference type="PANTHER" id="PTHR11538">
    <property type="entry name" value="PHENYLALANYL-TRNA SYNTHETASE"/>
    <property type="match status" value="1"/>
</dbReference>
<dbReference type="Pfam" id="PF02912">
    <property type="entry name" value="Phe_tRNA-synt_N"/>
    <property type="match status" value="1"/>
</dbReference>
<dbReference type="Pfam" id="PF01409">
    <property type="entry name" value="tRNA-synt_2d"/>
    <property type="match status" value="1"/>
</dbReference>
<dbReference type="SUPFAM" id="SSF55681">
    <property type="entry name" value="Class II aaRS and biotin synthetases"/>
    <property type="match status" value="1"/>
</dbReference>
<dbReference type="SUPFAM" id="SSF46589">
    <property type="entry name" value="tRNA-binding arm"/>
    <property type="match status" value="1"/>
</dbReference>
<dbReference type="PROSITE" id="PS50862">
    <property type="entry name" value="AA_TRNA_LIGASE_II"/>
    <property type="match status" value="1"/>
</dbReference>
<protein>
    <recommendedName>
        <fullName evidence="1">Phenylalanine--tRNA ligase alpha subunit</fullName>
        <ecNumber evidence="1">6.1.1.20</ecNumber>
    </recommendedName>
    <alternativeName>
        <fullName evidence="1">Phenylalanyl-tRNA synthetase alpha subunit</fullName>
        <shortName evidence="1">PheRS</shortName>
    </alternativeName>
</protein>
<comment type="catalytic activity">
    <reaction evidence="1">
        <text>tRNA(Phe) + L-phenylalanine + ATP = L-phenylalanyl-tRNA(Phe) + AMP + diphosphate + H(+)</text>
        <dbReference type="Rhea" id="RHEA:19413"/>
        <dbReference type="Rhea" id="RHEA-COMP:9668"/>
        <dbReference type="Rhea" id="RHEA-COMP:9699"/>
        <dbReference type="ChEBI" id="CHEBI:15378"/>
        <dbReference type="ChEBI" id="CHEBI:30616"/>
        <dbReference type="ChEBI" id="CHEBI:33019"/>
        <dbReference type="ChEBI" id="CHEBI:58095"/>
        <dbReference type="ChEBI" id="CHEBI:78442"/>
        <dbReference type="ChEBI" id="CHEBI:78531"/>
        <dbReference type="ChEBI" id="CHEBI:456215"/>
        <dbReference type="EC" id="6.1.1.20"/>
    </reaction>
</comment>
<comment type="cofactor">
    <cofactor evidence="1">
        <name>Mg(2+)</name>
        <dbReference type="ChEBI" id="CHEBI:18420"/>
    </cofactor>
    <text evidence="1">Binds 2 magnesium ions per tetramer.</text>
</comment>
<comment type="subunit">
    <text evidence="1">Tetramer of two alpha and two beta subunits.</text>
</comment>
<comment type="subcellular location">
    <subcellularLocation>
        <location evidence="1">Cytoplasm</location>
    </subcellularLocation>
</comment>
<comment type="similarity">
    <text evidence="1">Belongs to the class-II aminoacyl-tRNA synthetase family. Phe-tRNA synthetase alpha subunit type 1 subfamily.</text>
</comment>
<evidence type="ECO:0000255" key="1">
    <source>
        <dbReference type="HAMAP-Rule" id="MF_00281"/>
    </source>
</evidence>
<reference key="1">
    <citation type="journal article" date="2006" name="Nat. Biotechnol.">
        <title>Complete genome of the mutualistic, N2-fixing grass endophyte Azoarcus sp. strain BH72.</title>
        <authorList>
            <person name="Krause A."/>
            <person name="Ramakumar A."/>
            <person name="Bartels D."/>
            <person name="Battistoni F."/>
            <person name="Bekel T."/>
            <person name="Boch J."/>
            <person name="Boehm M."/>
            <person name="Friedrich F."/>
            <person name="Hurek T."/>
            <person name="Krause L."/>
            <person name="Linke B."/>
            <person name="McHardy A.C."/>
            <person name="Sarkar A."/>
            <person name="Schneiker S."/>
            <person name="Syed A.A."/>
            <person name="Thauer R."/>
            <person name="Vorhoelter F.-J."/>
            <person name="Weidner S."/>
            <person name="Puehler A."/>
            <person name="Reinhold-Hurek B."/>
            <person name="Kaiser O."/>
            <person name="Goesmann A."/>
        </authorList>
    </citation>
    <scope>NUCLEOTIDE SEQUENCE [LARGE SCALE GENOMIC DNA]</scope>
    <source>
        <strain>BH72</strain>
    </source>
</reference>
<proteinExistence type="inferred from homology"/>
<organism>
    <name type="scientific">Azoarcus sp. (strain BH72)</name>
    <dbReference type="NCBI Taxonomy" id="418699"/>
    <lineage>
        <taxon>Bacteria</taxon>
        <taxon>Pseudomonadati</taxon>
        <taxon>Pseudomonadota</taxon>
        <taxon>Betaproteobacteria</taxon>
        <taxon>Rhodocyclales</taxon>
        <taxon>Zoogloeaceae</taxon>
        <taxon>Azoarcus</taxon>
    </lineage>
</organism>
<accession>A1K4E5</accession>
<name>SYFA_AZOSB</name>